<sequence length="724" mass="80088">MTNRWDPGVTRALAEARHGDAFAVLGAHPSTNGRLLRTYHPGAEHVTAVLADGREVPLEAGPEPGLFAGELPAEGRYRLRIGWPGGTQDTADPYAFGPLLSDFDLHLISEGHHLQLADALGANAVEVDGVRGTRFAVWAPNASRVAVVGDFNSWDARRHPMRLRHQAGVWELFVPDVGPGAHYKYQLRGPHGHELPAKADPVARRAELAPGTASIVADPTPHQWSDDGWMATRARRQAHDAPMSIYEIHAGSWLREEGLDLDWDGLADRLIPYVADMGFTHVELMPVTEHPFGGSWGYQPLGLFAPTARFGSPDGFARFVDRCHREGIGVIVDWVPAHFPTDAHGLAHFDGTALYEHADPREGFHRDWNTLIYNHGRREVSGFLIASALEFLQRYHVDGLRVDAVASMLYRDYSRNAGEWVPNIHGGRENYETIAFLRRLNEVVREHAPGAVTIAEESTAWPGVTADVSHGGLGFHYKWNMGWMHDTLHYIGLDPIYRRYHHGELTFSMVYAYSERFVLPISHDEVVHGKGSLLGRMPGDDWQRFANLRAYLGFMFTHPGRKLLFMGCEFGQPTEWNHDAGLPWHLLDDARHRGVQTLVRDLNHLYAQYPALHAHDDDPSGFAWLVGDDAANSVVAFLRKGKRGDAPVLVVINYTPVVQQGYRLGVPQGGLWREVFNSDAGIYGGANLGNGGAVTAEPQSMHGHAQSLPLLLPPLGVIVLAPQG</sequence>
<organism>
    <name type="scientific">Xanthomonas campestris pv. campestris (strain ATCC 33913 / DSM 3586 / NCPPB 528 / LMG 568 / P 25)</name>
    <dbReference type="NCBI Taxonomy" id="190485"/>
    <lineage>
        <taxon>Bacteria</taxon>
        <taxon>Pseudomonadati</taxon>
        <taxon>Pseudomonadota</taxon>
        <taxon>Gammaproteobacteria</taxon>
        <taxon>Lysobacterales</taxon>
        <taxon>Lysobacteraceae</taxon>
        <taxon>Xanthomonas</taxon>
    </lineage>
</organism>
<name>GLGB1_XANCP</name>
<reference key="1">
    <citation type="journal article" date="2002" name="Nature">
        <title>Comparison of the genomes of two Xanthomonas pathogens with differing host specificities.</title>
        <authorList>
            <person name="da Silva A.C.R."/>
            <person name="Ferro J.A."/>
            <person name="Reinach F.C."/>
            <person name="Farah C.S."/>
            <person name="Furlan L.R."/>
            <person name="Quaggio R.B."/>
            <person name="Monteiro-Vitorello C.B."/>
            <person name="Van Sluys M.A."/>
            <person name="Almeida N.F. Jr."/>
            <person name="Alves L.M.C."/>
            <person name="do Amaral A.M."/>
            <person name="Bertolini M.C."/>
            <person name="Camargo L.E.A."/>
            <person name="Camarotte G."/>
            <person name="Cannavan F."/>
            <person name="Cardozo J."/>
            <person name="Chambergo F."/>
            <person name="Ciapina L.P."/>
            <person name="Cicarelli R.M.B."/>
            <person name="Coutinho L.L."/>
            <person name="Cursino-Santos J.R."/>
            <person name="El-Dorry H."/>
            <person name="Faria J.B."/>
            <person name="Ferreira A.J.S."/>
            <person name="Ferreira R.C.C."/>
            <person name="Ferro M.I.T."/>
            <person name="Formighieri E.F."/>
            <person name="Franco M.C."/>
            <person name="Greggio C.C."/>
            <person name="Gruber A."/>
            <person name="Katsuyama A.M."/>
            <person name="Kishi L.T."/>
            <person name="Leite R.P."/>
            <person name="Lemos E.G.M."/>
            <person name="Lemos M.V.F."/>
            <person name="Locali E.C."/>
            <person name="Machado M.A."/>
            <person name="Madeira A.M.B.N."/>
            <person name="Martinez-Rossi N.M."/>
            <person name="Martins E.C."/>
            <person name="Meidanis J."/>
            <person name="Menck C.F.M."/>
            <person name="Miyaki C.Y."/>
            <person name="Moon D.H."/>
            <person name="Moreira L.M."/>
            <person name="Novo M.T.M."/>
            <person name="Okura V.K."/>
            <person name="Oliveira M.C."/>
            <person name="Oliveira V.R."/>
            <person name="Pereira H.A."/>
            <person name="Rossi A."/>
            <person name="Sena J.A.D."/>
            <person name="Silva C."/>
            <person name="de Souza R.F."/>
            <person name="Spinola L.A.F."/>
            <person name="Takita M.A."/>
            <person name="Tamura R.E."/>
            <person name="Teixeira E.C."/>
            <person name="Tezza R.I.D."/>
            <person name="Trindade dos Santos M."/>
            <person name="Truffi D."/>
            <person name="Tsai S.M."/>
            <person name="White F.F."/>
            <person name="Setubal J.C."/>
            <person name="Kitajima J.P."/>
        </authorList>
    </citation>
    <scope>NUCLEOTIDE SEQUENCE [LARGE SCALE GENOMIC DNA]</scope>
    <source>
        <strain>ATCC 33913 / DSM 3586 / NCPPB 528 / LMG 568 / P 25</strain>
    </source>
</reference>
<keyword id="KW-0119">Carbohydrate metabolism</keyword>
<keyword id="KW-0320">Glycogen biosynthesis</keyword>
<keyword id="KW-0321">Glycogen metabolism</keyword>
<keyword id="KW-0328">Glycosyltransferase</keyword>
<keyword id="KW-1185">Reference proteome</keyword>
<keyword id="KW-0808">Transferase</keyword>
<proteinExistence type="inferred from homology"/>
<comment type="function">
    <text evidence="1">Catalyzes the formation of the alpha-1,6-glucosidic linkages in glycogen by scission of a 1,4-alpha-linked oligosaccharide from growing alpha-1,4-glucan chains and the subsequent attachment of the oligosaccharide to the alpha-1,6 position.</text>
</comment>
<comment type="catalytic activity">
    <reaction>
        <text>Transfers a segment of a (1-&gt;4)-alpha-D-glucan chain to a primary hydroxy group in a similar glucan chain.</text>
        <dbReference type="EC" id="2.4.1.18"/>
    </reaction>
</comment>
<comment type="pathway">
    <text>Glycan biosynthesis; glycogen biosynthesis.</text>
</comment>
<comment type="subunit">
    <text evidence="1">Monomer.</text>
</comment>
<comment type="similarity">
    <text evidence="2">Belongs to the glycosyl hydrolase 13 family. GlgB subfamily.</text>
</comment>
<gene>
    <name type="primary">glgB1</name>
    <name type="ordered locus">XCC0135</name>
</gene>
<protein>
    <recommendedName>
        <fullName>1,4-alpha-glucan branching enzyme GlgB 1</fullName>
        <ecNumber>2.4.1.18</ecNumber>
    </recommendedName>
    <alternativeName>
        <fullName>1,4-alpha-D-glucan:1,4-alpha-D-glucan 6-glucosyl-transferase 1</fullName>
    </alternativeName>
    <alternativeName>
        <fullName>Alpha-(1-&gt;4)-glucan branching enzyme 1</fullName>
    </alternativeName>
    <alternativeName>
        <fullName>Glycogen branching enzyme 1</fullName>
        <shortName>BE 1</shortName>
    </alternativeName>
</protein>
<accession>Q8PE48</accession>
<feature type="chain" id="PRO_0000188766" description="1,4-alpha-glucan branching enzyme GlgB 1">
    <location>
        <begin position="1"/>
        <end position="724"/>
    </location>
</feature>
<feature type="active site" description="Nucleophile" evidence="1">
    <location>
        <position position="403"/>
    </location>
</feature>
<feature type="active site" description="Proton donor" evidence="1">
    <location>
        <position position="456"/>
    </location>
</feature>
<dbReference type="EC" id="2.4.1.18"/>
<dbReference type="EMBL" id="AE008922">
    <property type="protein sequence ID" value="AAM39454.1"/>
    <property type="molecule type" value="Genomic_DNA"/>
</dbReference>
<dbReference type="RefSeq" id="NP_635530.2">
    <property type="nucleotide sequence ID" value="NC_003902.1"/>
</dbReference>
<dbReference type="SMR" id="Q8PE48"/>
<dbReference type="STRING" id="190485.XCC0135"/>
<dbReference type="CAZy" id="CBM48">
    <property type="family name" value="Carbohydrate-Binding Module Family 48"/>
</dbReference>
<dbReference type="CAZy" id="GH13">
    <property type="family name" value="Glycoside Hydrolase Family 13"/>
</dbReference>
<dbReference type="EnsemblBacteria" id="AAM39454">
    <property type="protein sequence ID" value="AAM39454"/>
    <property type="gene ID" value="XCC0135"/>
</dbReference>
<dbReference type="KEGG" id="xcc:XCC0135"/>
<dbReference type="PATRIC" id="fig|190485.4.peg.150"/>
<dbReference type="eggNOG" id="COG0296">
    <property type="taxonomic scope" value="Bacteria"/>
</dbReference>
<dbReference type="HOGENOM" id="CLU_004245_3_2_6"/>
<dbReference type="OrthoDB" id="9800174at2"/>
<dbReference type="UniPathway" id="UPA00164"/>
<dbReference type="Proteomes" id="UP000001010">
    <property type="component" value="Chromosome"/>
</dbReference>
<dbReference type="GO" id="GO:0005737">
    <property type="term" value="C:cytoplasm"/>
    <property type="evidence" value="ECO:0000318"/>
    <property type="project" value="GO_Central"/>
</dbReference>
<dbReference type="GO" id="GO:0005829">
    <property type="term" value="C:cytosol"/>
    <property type="evidence" value="ECO:0000318"/>
    <property type="project" value="GO_Central"/>
</dbReference>
<dbReference type="GO" id="GO:0003844">
    <property type="term" value="F:1,4-alpha-glucan branching enzyme activity"/>
    <property type="evidence" value="ECO:0000318"/>
    <property type="project" value="GO_Central"/>
</dbReference>
<dbReference type="GO" id="GO:0043169">
    <property type="term" value="F:cation binding"/>
    <property type="evidence" value="ECO:0007669"/>
    <property type="project" value="InterPro"/>
</dbReference>
<dbReference type="GO" id="GO:0004553">
    <property type="term" value="F:hydrolase activity, hydrolyzing O-glycosyl compounds"/>
    <property type="evidence" value="ECO:0007669"/>
    <property type="project" value="InterPro"/>
</dbReference>
<dbReference type="GO" id="GO:0005978">
    <property type="term" value="P:glycogen biosynthetic process"/>
    <property type="evidence" value="ECO:0000318"/>
    <property type="project" value="GO_Central"/>
</dbReference>
<dbReference type="CDD" id="cd11322">
    <property type="entry name" value="AmyAc_Glg_BE"/>
    <property type="match status" value="1"/>
</dbReference>
<dbReference type="CDD" id="cd02855">
    <property type="entry name" value="E_set_GBE_prok_N"/>
    <property type="match status" value="1"/>
</dbReference>
<dbReference type="FunFam" id="2.60.40.10:FF:000169">
    <property type="entry name" value="1,4-alpha-glucan branching enzyme GlgB"/>
    <property type="match status" value="1"/>
</dbReference>
<dbReference type="FunFam" id="2.60.40.1180:FF:000002">
    <property type="entry name" value="1,4-alpha-glucan branching enzyme GlgB"/>
    <property type="match status" value="1"/>
</dbReference>
<dbReference type="FunFam" id="3.20.20.80:FF:000003">
    <property type="entry name" value="1,4-alpha-glucan branching enzyme GlgB"/>
    <property type="match status" value="1"/>
</dbReference>
<dbReference type="Gene3D" id="3.20.20.80">
    <property type="entry name" value="Glycosidases"/>
    <property type="match status" value="1"/>
</dbReference>
<dbReference type="Gene3D" id="2.60.40.1180">
    <property type="entry name" value="Golgi alpha-mannosidase II"/>
    <property type="match status" value="1"/>
</dbReference>
<dbReference type="Gene3D" id="2.60.40.10">
    <property type="entry name" value="Immunoglobulins"/>
    <property type="match status" value="2"/>
</dbReference>
<dbReference type="HAMAP" id="MF_00685">
    <property type="entry name" value="GlgB"/>
    <property type="match status" value="1"/>
</dbReference>
<dbReference type="InterPro" id="IPR006048">
    <property type="entry name" value="A-amylase/branching_C"/>
</dbReference>
<dbReference type="InterPro" id="IPR037439">
    <property type="entry name" value="Branching_enzy"/>
</dbReference>
<dbReference type="InterPro" id="IPR006407">
    <property type="entry name" value="GlgB"/>
</dbReference>
<dbReference type="InterPro" id="IPR054169">
    <property type="entry name" value="GlgB_N"/>
</dbReference>
<dbReference type="InterPro" id="IPR044143">
    <property type="entry name" value="GlgB_N_E_set_prok"/>
</dbReference>
<dbReference type="InterPro" id="IPR006047">
    <property type="entry name" value="Glyco_hydro_13_cat_dom"/>
</dbReference>
<dbReference type="InterPro" id="IPR004193">
    <property type="entry name" value="Glyco_hydro_13_N"/>
</dbReference>
<dbReference type="InterPro" id="IPR013780">
    <property type="entry name" value="Glyco_hydro_b"/>
</dbReference>
<dbReference type="InterPro" id="IPR017853">
    <property type="entry name" value="Glycoside_hydrolase_SF"/>
</dbReference>
<dbReference type="InterPro" id="IPR013783">
    <property type="entry name" value="Ig-like_fold"/>
</dbReference>
<dbReference type="InterPro" id="IPR014756">
    <property type="entry name" value="Ig_E-set"/>
</dbReference>
<dbReference type="NCBIfam" id="TIGR01515">
    <property type="entry name" value="branching_enzym"/>
    <property type="match status" value="1"/>
</dbReference>
<dbReference type="NCBIfam" id="NF003811">
    <property type="entry name" value="PRK05402.1"/>
    <property type="match status" value="1"/>
</dbReference>
<dbReference type="NCBIfam" id="NF008967">
    <property type="entry name" value="PRK12313.1"/>
    <property type="match status" value="1"/>
</dbReference>
<dbReference type="PANTHER" id="PTHR43651">
    <property type="entry name" value="1,4-ALPHA-GLUCAN-BRANCHING ENZYME"/>
    <property type="match status" value="1"/>
</dbReference>
<dbReference type="PANTHER" id="PTHR43651:SF3">
    <property type="entry name" value="1,4-ALPHA-GLUCAN-BRANCHING ENZYME"/>
    <property type="match status" value="1"/>
</dbReference>
<dbReference type="Pfam" id="PF00128">
    <property type="entry name" value="Alpha-amylase"/>
    <property type="match status" value="1"/>
</dbReference>
<dbReference type="Pfam" id="PF02806">
    <property type="entry name" value="Alpha-amylase_C"/>
    <property type="match status" value="1"/>
</dbReference>
<dbReference type="Pfam" id="PF02922">
    <property type="entry name" value="CBM_48"/>
    <property type="match status" value="1"/>
</dbReference>
<dbReference type="Pfam" id="PF22019">
    <property type="entry name" value="GlgB_N"/>
    <property type="match status" value="1"/>
</dbReference>
<dbReference type="PIRSF" id="PIRSF000463">
    <property type="entry name" value="GlgB"/>
    <property type="match status" value="1"/>
</dbReference>
<dbReference type="SMART" id="SM00642">
    <property type="entry name" value="Aamy"/>
    <property type="match status" value="1"/>
</dbReference>
<dbReference type="SUPFAM" id="SSF51445">
    <property type="entry name" value="(Trans)glycosidases"/>
    <property type="match status" value="1"/>
</dbReference>
<dbReference type="SUPFAM" id="SSF81296">
    <property type="entry name" value="E set domains"/>
    <property type="match status" value="1"/>
</dbReference>
<dbReference type="SUPFAM" id="SSF51011">
    <property type="entry name" value="Glycosyl hydrolase domain"/>
    <property type="match status" value="1"/>
</dbReference>
<evidence type="ECO:0000250" key="1"/>
<evidence type="ECO:0000305" key="2"/>